<evidence type="ECO:0000255" key="1">
    <source>
        <dbReference type="HAMAP-Rule" id="MF_00441"/>
    </source>
</evidence>
<evidence type="ECO:0000305" key="2"/>
<keyword id="KW-0150">Chloroplast</keyword>
<keyword id="KW-0472">Membrane</keyword>
<keyword id="KW-0602">Photosynthesis</keyword>
<keyword id="KW-0604">Photosystem II</keyword>
<keyword id="KW-0934">Plastid</keyword>
<keyword id="KW-0674">Reaction center</keyword>
<keyword id="KW-0793">Thylakoid</keyword>
<keyword id="KW-0812">Transmembrane</keyword>
<keyword id="KW-1133">Transmembrane helix</keyword>
<sequence>MFNIFLDDAFIHSNNPFFGKLPEAYAISDPIVDVMPIIPVLSFLLAFVWQAAVSFR</sequence>
<proteinExistence type="inferred from homology"/>
<gene>
    <name evidence="1" type="primary">psbK</name>
</gene>
<name>PSBK_PINTH</name>
<reference key="1">
    <citation type="journal article" date="1994" name="Proc. Natl. Acad. Sci. U.S.A.">
        <title>Loss of all ndh genes as determined by sequencing the entire chloroplast genome of the black pine Pinus thunbergii.</title>
        <authorList>
            <person name="Wakasugi T."/>
            <person name="Tsudzuki J."/>
            <person name="Ito S."/>
            <person name="Nakashima K."/>
            <person name="Tsudzuki T."/>
            <person name="Sugiura M."/>
        </authorList>
    </citation>
    <scope>NUCLEOTIDE SEQUENCE [LARGE SCALE GENOMIC DNA]</scope>
</reference>
<protein>
    <recommendedName>
        <fullName evidence="1">Photosystem II reaction center protein K</fullName>
        <shortName evidence="1">PSII-K</shortName>
    </recommendedName>
</protein>
<feature type="propeptide" id="PRO_0000029513" evidence="1">
    <location>
        <begin position="1"/>
        <end position="19"/>
    </location>
</feature>
<feature type="chain" id="PRO_0000029514" description="Photosystem II reaction center protein K" evidence="1">
    <location>
        <begin position="20"/>
        <end position="56"/>
    </location>
</feature>
<feature type="transmembrane region" description="Helical" evidence="1">
    <location>
        <begin position="35"/>
        <end position="55"/>
    </location>
</feature>
<accession>P41598</accession>
<dbReference type="EMBL" id="D17510">
    <property type="protein sequence ID" value="BAA04312.1"/>
    <property type="status" value="ALT_INIT"/>
    <property type="molecule type" value="Genomic_DNA"/>
</dbReference>
<dbReference type="PIR" id="T07432">
    <property type="entry name" value="T07432"/>
</dbReference>
<dbReference type="RefSeq" id="NP_042353.1">
    <property type="nucleotide sequence ID" value="NC_001631.1"/>
</dbReference>
<dbReference type="SMR" id="P41598"/>
<dbReference type="GeneID" id="809095"/>
<dbReference type="GO" id="GO:0009535">
    <property type="term" value="C:chloroplast thylakoid membrane"/>
    <property type="evidence" value="ECO:0007669"/>
    <property type="project" value="UniProtKB-SubCell"/>
</dbReference>
<dbReference type="GO" id="GO:0009539">
    <property type="term" value="C:photosystem II reaction center"/>
    <property type="evidence" value="ECO:0007669"/>
    <property type="project" value="InterPro"/>
</dbReference>
<dbReference type="GO" id="GO:0015979">
    <property type="term" value="P:photosynthesis"/>
    <property type="evidence" value="ECO:0007669"/>
    <property type="project" value="UniProtKB-UniRule"/>
</dbReference>
<dbReference type="HAMAP" id="MF_00441">
    <property type="entry name" value="PSII_PsbK"/>
    <property type="match status" value="1"/>
</dbReference>
<dbReference type="InterPro" id="IPR003687">
    <property type="entry name" value="PSII_PsbK"/>
</dbReference>
<dbReference type="InterPro" id="IPR037270">
    <property type="entry name" value="PSII_PsbK_sf"/>
</dbReference>
<dbReference type="NCBIfam" id="NF002715">
    <property type="entry name" value="PRK02553.1"/>
    <property type="match status" value="1"/>
</dbReference>
<dbReference type="PANTHER" id="PTHR35325">
    <property type="match status" value="1"/>
</dbReference>
<dbReference type="PANTHER" id="PTHR35325:SF1">
    <property type="entry name" value="PHOTOSYSTEM II REACTION CENTER PROTEIN K"/>
    <property type="match status" value="1"/>
</dbReference>
<dbReference type="Pfam" id="PF02533">
    <property type="entry name" value="PsbK"/>
    <property type="match status" value="1"/>
</dbReference>
<dbReference type="SUPFAM" id="SSF161037">
    <property type="entry name" value="Photosystem II reaction center protein K, PsbK"/>
    <property type="match status" value="1"/>
</dbReference>
<organism>
    <name type="scientific">Pinus thunbergii</name>
    <name type="common">Japanese black pine</name>
    <name type="synonym">Pinus thunbergiana</name>
    <dbReference type="NCBI Taxonomy" id="3350"/>
    <lineage>
        <taxon>Eukaryota</taxon>
        <taxon>Viridiplantae</taxon>
        <taxon>Streptophyta</taxon>
        <taxon>Embryophyta</taxon>
        <taxon>Tracheophyta</taxon>
        <taxon>Spermatophyta</taxon>
        <taxon>Pinopsida</taxon>
        <taxon>Pinidae</taxon>
        <taxon>Conifers I</taxon>
        <taxon>Pinales</taxon>
        <taxon>Pinaceae</taxon>
        <taxon>Pinus</taxon>
        <taxon>Pinus subgen. Pinus</taxon>
    </lineage>
</organism>
<comment type="function">
    <text evidence="1">One of the components of the core complex of photosystem II (PSII). PSII is a light-driven water:plastoquinone oxidoreductase that uses light energy to abstract electrons from H(2)O, generating O(2) and a proton gradient subsequently used for ATP formation. It consists of a core antenna complex that captures photons, and an electron transfer chain that converts photonic excitation into a charge separation.</text>
</comment>
<comment type="subunit">
    <text evidence="1">PSII is composed of 1 copy each of membrane proteins PsbA, PsbB, PsbC, PsbD, PsbE, PsbF, PsbH, PsbI, PsbJ, PsbK, PsbL, PsbM, PsbT, PsbX, PsbY, PsbZ, Psb30/Ycf12, at least 3 peripheral proteins of the oxygen-evolving complex and a large number of cofactors. It forms dimeric complexes.</text>
</comment>
<comment type="subcellular location">
    <subcellularLocation>
        <location evidence="1">Plastid</location>
        <location evidence="1">Chloroplast thylakoid membrane</location>
        <topology evidence="1">Single-pass membrane protein</topology>
    </subcellularLocation>
</comment>
<comment type="similarity">
    <text evidence="1">Belongs to the PsbK family.</text>
</comment>
<comment type="sequence caution" evidence="2">
    <conflict type="erroneous initiation">
        <sequence resource="EMBL-CDS" id="BAA04312"/>
    </conflict>
    <text>Extended N-terminus.</text>
</comment>
<geneLocation type="chloroplast"/>